<comment type="function">
    <text evidence="1">Required for the insertion and/or proper folding and/or complex formation of integral membrane proteins into the membrane. Involved in integration of membrane proteins that insert both dependently and independently of the Sec translocase complex, as well as at least some lipoproteins. Aids folding of multispanning membrane proteins.</text>
</comment>
<comment type="subunit">
    <text evidence="1">Interacts with the Sec translocase complex via SecD. Specifically interacts with transmembrane segments of nascent integral membrane proteins during membrane integration.</text>
</comment>
<comment type="subcellular location">
    <subcellularLocation>
        <location evidence="1">Cell inner membrane</location>
        <topology evidence="1">Multi-pass membrane protein</topology>
    </subcellularLocation>
</comment>
<comment type="similarity">
    <text evidence="1">Belongs to the OXA1/ALB3/YidC family. Type 1 subfamily.</text>
</comment>
<dbReference type="EMBL" id="CP000503">
    <property type="protein sequence ID" value="ABM26894.1"/>
    <property type="molecule type" value="Genomic_DNA"/>
</dbReference>
<dbReference type="RefSeq" id="WP_011791313.1">
    <property type="nucleotide sequence ID" value="NC_008750.1"/>
</dbReference>
<dbReference type="SMR" id="A1RQE9"/>
<dbReference type="GeneID" id="67445480"/>
<dbReference type="KEGG" id="shw:Sputw3181_4092"/>
<dbReference type="HOGENOM" id="CLU_016535_3_0_6"/>
<dbReference type="Proteomes" id="UP000002597">
    <property type="component" value="Chromosome"/>
</dbReference>
<dbReference type="GO" id="GO:0005886">
    <property type="term" value="C:plasma membrane"/>
    <property type="evidence" value="ECO:0007669"/>
    <property type="project" value="UniProtKB-SubCell"/>
</dbReference>
<dbReference type="GO" id="GO:0032977">
    <property type="term" value="F:membrane insertase activity"/>
    <property type="evidence" value="ECO:0007669"/>
    <property type="project" value="InterPro"/>
</dbReference>
<dbReference type="GO" id="GO:0051205">
    <property type="term" value="P:protein insertion into membrane"/>
    <property type="evidence" value="ECO:0007669"/>
    <property type="project" value="TreeGrafter"/>
</dbReference>
<dbReference type="GO" id="GO:0015031">
    <property type="term" value="P:protein transport"/>
    <property type="evidence" value="ECO:0007669"/>
    <property type="project" value="UniProtKB-KW"/>
</dbReference>
<dbReference type="CDD" id="cd20070">
    <property type="entry name" value="5TM_YidC_Alb3"/>
    <property type="match status" value="1"/>
</dbReference>
<dbReference type="CDD" id="cd19961">
    <property type="entry name" value="EcYidC-like_peri"/>
    <property type="match status" value="1"/>
</dbReference>
<dbReference type="FunFam" id="2.70.98.90:FF:000004">
    <property type="entry name" value="Membrane protein insertase YidC"/>
    <property type="match status" value="1"/>
</dbReference>
<dbReference type="Gene3D" id="2.70.98.90">
    <property type="match status" value="1"/>
</dbReference>
<dbReference type="HAMAP" id="MF_01810">
    <property type="entry name" value="YidC_type1"/>
    <property type="match status" value="1"/>
</dbReference>
<dbReference type="InterPro" id="IPR019998">
    <property type="entry name" value="Membr_insert_YidC"/>
</dbReference>
<dbReference type="InterPro" id="IPR028053">
    <property type="entry name" value="Membr_insert_YidC_N"/>
</dbReference>
<dbReference type="InterPro" id="IPR001708">
    <property type="entry name" value="YidC/ALB3/OXA1/COX18"/>
</dbReference>
<dbReference type="InterPro" id="IPR028055">
    <property type="entry name" value="YidC/Oxa/ALB_C"/>
</dbReference>
<dbReference type="InterPro" id="IPR047196">
    <property type="entry name" value="YidC_ALB_C"/>
</dbReference>
<dbReference type="InterPro" id="IPR038221">
    <property type="entry name" value="YidC_periplasmic_sf"/>
</dbReference>
<dbReference type="NCBIfam" id="NF002351">
    <property type="entry name" value="PRK01318.1-1"/>
    <property type="match status" value="1"/>
</dbReference>
<dbReference type="NCBIfam" id="NF002352">
    <property type="entry name" value="PRK01318.1-3"/>
    <property type="match status" value="1"/>
</dbReference>
<dbReference type="NCBIfam" id="TIGR03593">
    <property type="entry name" value="yidC_nterm"/>
    <property type="match status" value="1"/>
</dbReference>
<dbReference type="NCBIfam" id="TIGR03592">
    <property type="entry name" value="yidC_oxa1_cterm"/>
    <property type="match status" value="1"/>
</dbReference>
<dbReference type="PANTHER" id="PTHR12428:SF65">
    <property type="entry name" value="CYTOCHROME C OXIDASE ASSEMBLY PROTEIN COX18, MITOCHONDRIAL"/>
    <property type="match status" value="1"/>
</dbReference>
<dbReference type="PANTHER" id="PTHR12428">
    <property type="entry name" value="OXA1"/>
    <property type="match status" value="1"/>
</dbReference>
<dbReference type="Pfam" id="PF02096">
    <property type="entry name" value="60KD_IMP"/>
    <property type="match status" value="1"/>
</dbReference>
<dbReference type="Pfam" id="PF14849">
    <property type="entry name" value="YidC_periplas"/>
    <property type="match status" value="1"/>
</dbReference>
<dbReference type="PRINTS" id="PR00701">
    <property type="entry name" value="60KDINNERMP"/>
</dbReference>
<dbReference type="PRINTS" id="PR01900">
    <property type="entry name" value="YIDCPROTEIN"/>
</dbReference>
<name>YIDC_SHESW</name>
<evidence type="ECO:0000255" key="1">
    <source>
        <dbReference type="HAMAP-Rule" id="MF_01810"/>
    </source>
</evidence>
<gene>
    <name evidence="1" type="primary">yidC</name>
    <name type="ordered locus">Sputw3181_4092</name>
</gene>
<proteinExistence type="inferred from homology"/>
<reference key="1">
    <citation type="submission" date="2006-12" db="EMBL/GenBank/DDBJ databases">
        <title>Complete sequence of Shewanella sp. W3-18-1.</title>
        <authorList>
            <consortium name="US DOE Joint Genome Institute"/>
            <person name="Copeland A."/>
            <person name="Lucas S."/>
            <person name="Lapidus A."/>
            <person name="Barry K."/>
            <person name="Detter J.C."/>
            <person name="Glavina del Rio T."/>
            <person name="Hammon N."/>
            <person name="Israni S."/>
            <person name="Dalin E."/>
            <person name="Tice H."/>
            <person name="Pitluck S."/>
            <person name="Chain P."/>
            <person name="Malfatti S."/>
            <person name="Shin M."/>
            <person name="Vergez L."/>
            <person name="Schmutz J."/>
            <person name="Larimer F."/>
            <person name="Land M."/>
            <person name="Hauser L."/>
            <person name="Kyrpides N."/>
            <person name="Lykidis A."/>
            <person name="Tiedje J."/>
            <person name="Richardson P."/>
        </authorList>
    </citation>
    <scope>NUCLEOTIDE SEQUENCE [LARGE SCALE GENOMIC DNA]</scope>
    <source>
        <strain>W3-18-1</strain>
    </source>
</reference>
<sequence length="541" mass="60306">MESQRNILLIGLLFVSFLLWQQWQADKAPKPVATESSLVANVASTHSADVPEADTGVPAAVAASKNLITVKTDQLDVQINPVGGDIVFAALVSHKMEQGKEQPFVLLEQTKDYTYIAQSGLIGRDGIDSSANGRAAFTTSATEFTLAEGQDTLEVPLTYVADNGVTYTKVFVFHRGKFNVDVDYKINNTSAAPLQVQMYGQIKQTIKPSESSMMMPTYRGGAFSTNDVRYEKYNFDDMAKSNLNQATLGGWAAMLQHYFVSAWVPPATDSNTIFSSVSAGGLANIGFRGAVYDIAPGASQEISSQFYVGPKDQAALSAISETLNLVVDYGFLWWLAVPIHWLLMFYQSFVGNWGVAIILITLTVRGLLFPLTKAQYTSMAKMRNLQPKLADLKERFGDDRQKMGQAMMELYKKEKVNPMGGCLPIILQMPIFIALYWVLLESFELRHAPFMLWIHDLSVQDPYYILPLLMGVSMFIMQKMQPIAPTMDPMQVKMMQWMPVIFTVFFLWFPSGLVLYWLVGNIVAIIQQKIIYAGLEKKGLK</sequence>
<protein>
    <recommendedName>
        <fullName evidence="1">Membrane protein insertase YidC</fullName>
    </recommendedName>
    <alternativeName>
        <fullName evidence="1">Foldase YidC</fullName>
    </alternativeName>
    <alternativeName>
        <fullName evidence="1">Membrane integrase YidC</fullName>
    </alternativeName>
    <alternativeName>
        <fullName evidence="1">Membrane protein YidC</fullName>
    </alternativeName>
</protein>
<feature type="chain" id="PRO_1000070175" description="Membrane protein insertase YidC">
    <location>
        <begin position="1"/>
        <end position="541"/>
    </location>
</feature>
<feature type="transmembrane region" description="Helical" evidence="1">
    <location>
        <begin position="6"/>
        <end position="26"/>
    </location>
</feature>
<feature type="transmembrane region" description="Helical" evidence="1">
    <location>
        <begin position="325"/>
        <end position="345"/>
    </location>
</feature>
<feature type="transmembrane region" description="Helical" evidence="1">
    <location>
        <begin position="349"/>
        <end position="369"/>
    </location>
</feature>
<feature type="transmembrane region" description="Helical" evidence="1">
    <location>
        <begin position="420"/>
        <end position="440"/>
    </location>
</feature>
<feature type="transmembrane region" description="Helical" evidence="1">
    <location>
        <begin position="457"/>
        <end position="477"/>
    </location>
</feature>
<feature type="transmembrane region" description="Helical" evidence="1">
    <location>
        <begin position="500"/>
        <end position="520"/>
    </location>
</feature>
<accession>A1RQE9</accession>
<organism>
    <name type="scientific">Shewanella sp. (strain W3-18-1)</name>
    <dbReference type="NCBI Taxonomy" id="351745"/>
    <lineage>
        <taxon>Bacteria</taxon>
        <taxon>Pseudomonadati</taxon>
        <taxon>Pseudomonadota</taxon>
        <taxon>Gammaproteobacteria</taxon>
        <taxon>Alteromonadales</taxon>
        <taxon>Shewanellaceae</taxon>
        <taxon>Shewanella</taxon>
    </lineage>
</organism>
<keyword id="KW-0997">Cell inner membrane</keyword>
<keyword id="KW-1003">Cell membrane</keyword>
<keyword id="KW-0143">Chaperone</keyword>
<keyword id="KW-0472">Membrane</keyword>
<keyword id="KW-0653">Protein transport</keyword>
<keyword id="KW-0812">Transmembrane</keyword>
<keyword id="KW-1133">Transmembrane helix</keyword>
<keyword id="KW-0813">Transport</keyword>